<dbReference type="EC" id="3.6.1.9" evidence="1"/>
<dbReference type="EMBL" id="AM398681">
    <property type="protein sequence ID" value="CAL43498.1"/>
    <property type="molecule type" value="Genomic_DNA"/>
</dbReference>
<dbReference type="RefSeq" id="WP_011963543.1">
    <property type="nucleotide sequence ID" value="NC_009613.3"/>
</dbReference>
<dbReference type="RefSeq" id="YP_001296307.1">
    <property type="nucleotide sequence ID" value="NC_009613.3"/>
</dbReference>
<dbReference type="SMR" id="A6GZH5"/>
<dbReference type="STRING" id="402612.FP1422"/>
<dbReference type="EnsemblBacteria" id="CAL43498">
    <property type="protein sequence ID" value="CAL43498"/>
    <property type="gene ID" value="FP1422"/>
</dbReference>
<dbReference type="GeneID" id="66552881"/>
<dbReference type="KEGG" id="fps:FP1422"/>
<dbReference type="PATRIC" id="fig|402612.5.peg.1437"/>
<dbReference type="eggNOG" id="COG0424">
    <property type="taxonomic scope" value="Bacteria"/>
</dbReference>
<dbReference type="HOGENOM" id="CLU_040416_0_0_10"/>
<dbReference type="OrthoDB" id="9807767at2"/>
<dbReference type="Proteomes" id="UP000006394">
    <property type="component" value="Chromosome"/>
</dbReference>
<dbReference type="GO" id="GO:0005737">
    <property type="term" value="C:cytoplasm"/>
    <property type="evidence" value="ECO:0007669"/>
    <property type="project" value="UniProtKB-SubCell"/>
</dbReference>
<dbReference type="GO" id="GO:0036218">
    <property type="term" value="F:dTTP diphosphatase activity"/>
    <property type="evidence" value="ECO:0007669"/>
    <property type="project" value="RHEA"/>
</dbReference>
<dbReference type="GO" id="GO:0036221">
    <property type="term" value="F:UTP diphosphatase activity"/>
    <property type="evidence" value="ECO:0007669"/>
    <property type="project" value="RHEA"/>
</dbReference>
<dbReference type="GO" id="GO:0009117">
    <property type="term" value="P:nucleotide metabolic process"/>
    <property type="evidence" value="ECO:0007669"/>
    <property type="project" value="UniProtKB-KW"/>
</dbReference>
<dbReference type="CDD" id="cd00555">
    <property type="entry name" value="Maf"/>
    <property type="match status" value="1"/>
</dbReference>
<dbReference type="Gene3D" id="3.90.950.10">
    <property type="match status" value="1"/>
</dbReference>
<dbReference type="HAMAP" id="MF_00528">
    <property type="entry name" value="Maf"/>
    <property type="match status" value="1"/>
</dbReference>
<dbReference type="InterPro" id="IPR029001">
    <property type="entry name" value="ITPase-like_fam"/>
</dbReference>
<dbReference type="InterPro" id="IPR003697">
    <property type="entry name" value="Maf-like"/>
</dbReference>
<dbReference type="NCBIfam" id="TIGR00172">
    <property type="entry name" value="maf"/>
    <property type="match status" value="1"/>
</dbReference>
<dbReference type="PANTHER" id="PTHR43213">
    <property type="entry name" value="BIFUNCTIONAL DTTP/UTP PYROPHOSPHATASE/METHYLTRANSFERASE PROTEIN-RELATED"/>
    <property type="match status" value="1"/>
</dbReference>
<dbReference type="PANTHER" id="PTHR43213:SF5">
    <property type="entry name" value="BIFUNCTIONAL DTTP_UTP PYROPHOSPHATASE_METHYLTRANSFERASE PROTEIN-RELATED"/>
    <property type="match status" value="1"/>
</dbReference>
<dbReference type="Pfam" id="PF02545">
    <property type="entry name" value="Maf"/>
    <property type="match status" value="1"/>
</dbReference>
<dbReference type="PIRSF" id="PIRSF006305">
    <property type="entry name" value="Maf"/>
    <property type="match status" value="1"/>
</dbReference>
<dbReference type="SUPFAM" id="SSF52972">
    <property type="entry name" value="ITPase-like"/>
    <property type="match status" value="1"/>
</dbReference>
<comment type="function">
    <text evidence="1">Nucleoside triphosphate pyrophosphatase that hydrolyzes dTTP and UTP. May have a dual role in cell division arrest and in preventing the incorporation of modified nucleotides into cellular nucleic acids.</text>
</comment>
<comment type="catalytic activity">
    <reaction evidence="1">
        <text>dTTP + H2O = dTMP + diphosphate + H(+)</text>
        <dbReference type="Rhea" id="RHEA:28534"/>
        <dbReference type="ChEBI" id="CHEBI:15377"/>
        <dbReference type="ChEBI" id="CHEBI:15378"/>
        <dbReference type="ChEBI" id="CHEBI:33019"/>
        <dbReference type="ChEBI" id="CHEBI:37568"/>
        <dbReference type="ChEBI" id="CHEBI:63528"/>
        <dbReference type="EC" id="3.6.1.9"/>
    </reaction>
</comment>
<comment type="catalytic activity">
    <reaction evidence="1">
        <text>UTP + H2O = UMP + diphosphate + H(+)</text>
        <dbReference type="Rhea" id="RHEA:29395"/>
        <dbReference type="ChEBI" id="CHEBI:15377"/>
        <dbReference type="ChEBI" id="CHEBI:15378"/>
        <dbReference type="ChEBI" id="CHEBI:33019"/>
        <dbReference type="ChEBI" id="CHEBI:46398"/>
        <dbReference type="ChEBI" id="CHEBI:57865"/>
        <dbReference type="EC" id="3.6.1.9"/>
    </reaction>
</comment>
<comment type="cofactor">
    <cofactor evidence="1">
        <name>a divalent metal cation</name>
        <dbReference type="ChEBI" id="CHEBI:60240"/>
    </cofactor>
</comment>
<comment type="subcellular location">
    <subcellularLocation>
        <location evidence="1">Cytoplasm</location>
    </subcellularLocation>
</comment>
<comment type="similarity">
    <text evidence="1">Belongs to the Maf family. YhdE subfamily.</text>
</comment>
<reference key="1">
    <citation type="journal article" date="2007" name="Nat. Biotechnol.">
        <title>Complete genome sequence of the fish pathogen Flavobacterium psychrophilum.</title>
        <authorList>
            <person name="Duchaud E."/>
            <person name="Boussaha M."/>
            <person name="Loux V."/>
            <person name="Bernardet J.-F."/>
            <person name="Michel C."/>
            <person name="Kerouault B."/>
            <person name="Mondot S."/>
            <person name="Nicolas P."/>
            <person name="Bossy R."/>
            <person name="Caron C."/>
            <person name="Bessieres P."/>
            <person name="Gibrat J.-F."/>
            <person name="Claverol S."/>
            <person name="Dumetz F."/>
            <person name="Le Henaff M."/>
            <person name="Benmansour A."/>
        </authorList>
    </citation>
    <scope>NUCLEOTIDE SEQUENCE [LARGE SCALE GENOMIC DNA]</scope>
    <source>
        <strain>ATCC 49511 / DSM 21280 / CIP 103535 / JIP02/86</strain>
    </source>
</reference>
<keyword id="KW-0963">Cytoplasm</keyword>
<keyword id="KW-0378">Hydrolase</keyword>
<keyword id="KW-0546">Nucleotide metabolism</keyword>
<keyword id="KW-1185">Reference proteome</keyword>
<proteinExistence type="inferred from homology"/>
<evidence type="ECO:0000255" key="1">
    <source>
        <dbReference type="HAMAP-Rule" id="MF_00528"/>
    </source>
</evidence>
<feature type="chain" id="PRO_1000060940" description="dTTP/UTP pyrophosphatase">
    <location>
        <begin position="1"/>
        <end position="195"/>
    </location>
</feature>
<feature type="active site" description="Proton acceptor" evidence="1">
    <location>
        <position position="77"/>
    </location>
</feature>
<feature type="site" description="Important for substrate specificity" evidence="1">
    <location>
        <position position="19"/>
    </location>
</feature>
<feature type="site" description="Important for substrate specificity" evidence="1">
    <location>
        <position position="78"/>
    </location>
</feature>
<feature type="site" description="Important for substrate specificity" evidence="1">
    <location>
        <position position="160"/>
    </location>
</feature>
<accession>A6GZH5</accession>
<sequence length="195" mass="22401">MLRKKFENTKIILASGSPRRQEFFKNLDLDFEVRLKEIEEIFPKTLQSLEITDYLAKLKASAFDGDLLQNELLVTSDTLVWLQNEALGKPKDYDDAFAMLQKLSNQTHEVITSVCFKTKNKTEIINDITQVTFGKLSDEAIKYYLDNYKPFDKAGSYGIQEWIGLIGITNIHGSYTNVVGLPTEKVYLYLLNHTF</sequence>
<organism>
    <name type="scientific">Flavobacterium psychrophilum (strain ATCC 49511 / DSM 21280 / CIP 103535 / JIP02/86)</name>
    <dbReference type="NCBI Taxonomy" id="402612"/>
    <lineage>
        <taxon>Bacteria</taxon>
        <taxon>Pseudomonadati</taxon>
        <taxon>Bacteroidota</taxon>
        <taxon>Flavobacteriia</taxon>
        <taxon>Flavobacteriales</taxon>
        <taxon>Flavobacteriaceae</taxon>
        <taxon>Flavobacterium</taxon>
    </lineage>
</organism>
<gene>
    <name type="ordered locus">FP1422</name>
</gene>
<protein>
    <recommendedName>
        <fullName evidence="1">dTTP/UTP pyrophosphatase</fullName>
        <shortName evidence="1">dTTPase/UTPase</shortName>
        <ecNumber evidence="1">3.6.1.9</ecNumber>
    </recommendedName>
    <alternativeName>
        <fullName evidence="1">Nucleoside triphosphate pyrophosphatase</fullName>
    </alternativeName>
    <alternativeName>
        <fullName evidence="1">Nucleotide pyrophosphatase</fullName>
        <shortName evidence="1">Nucleotide PPase</shortName>
    </alternativeName>
</protein>
<name>NTPPA_FLAPJ</name>